<organism>
    <name type="scientific">Rattus norvegicus</name>
    <name type="common">Rat</name>
    <dbReference type="NCBI Taxonomy" id="10116"/>
    <lineage>
        <taxon>Eukaryota</taxon>
        <taxon>Metazoa</taxon>
        <taxon>Chordata</taxon>
        <taxon>Craniata</taxon>
        <taxon>Vertebrata</taxon>
        <taxon>Euteleostomi</taxon>
        <taxon>Mammalia</taxon>
        <taxon>Eutheria</taxon>
        <taxon>Euarchontoglires</taxon>
        <taxon>Glires</taxon>
        <taxon>Rodentia</taxon>
        <taxon>Myomorpha</taxon>
        <taxon>Muroidea</taxon>
        <taxon>Muridae</taxon>
        <taxon>Murinae</taxon>
        <taxon>Rattus</taxon>
    </lineage>
</organism>
<name>HEM2_RAT</name>
<proteinExistence type="evidence at protein level"/>
<reference key="1">
    <citation type="journal article" date="1986" name="Nucleic Acids Res.">
        <title>Nucleotide sequence of rat liver delta-aminolevulinic acid dehydratase cDNA.</title>
        <authorList>
            <person name="Bishop T.R."/>
            <person name="Frelin L.P."/>
            <person name="Boyer S.H."/>
        </authorList>
    </citation>
    <scope>NUCLEOTIDE SEQUENCE [MRNA]</scope>
    <source>
        <tissue>Liver</tissue>
    </source>
</reference>
<reference key="2">
    <citation type="journal article" date="2004" name="Genome Res.">
        <title>The status, quality, and expansion of the NIH full-length cDNA project: the Mammalian Gene Collection (MGC).</title>
        <authorList>
            <consortium name="The MGC Project Team"/>
        </authorList>
    </citation>
    <scope>NUCLEOTIDE SEQUENCE [LARGE SCALE MRNA]</scope>
    <source>
        <tissue>Prostate</tissue>
    </source>
</reference>
<reference key="3">
    <citation type="journal article" date="1986" name="Proc. Natl. Acad. Sci. U.S.A.">
        <title>Isolation of a rat liver delta-aminolevulinate dehydrase (ALAD) cDNA clone: evidence for unequal ALAD gene dosage among inbred mouse strains.</title>
        <authorList>
            <person name="Bishop T.R."/>
            <person name="Cohen P.J."/>
            <person name="Boyer S.H."/>
            <person name="Noyes A.N."/>
            <person name="Frelin L.P."/>
        </authorList>
    </citation>
    <scope>NUCLEOTIDE SEQUENCE [MRNA] OF 1-45</scope>
</reference>
<reference key="4">
    <citation type="submission" date="2006-11" db="UniProtKB">
        <authorList>
            <person name="Lubec G."/>
            <person name="Afjehi-Sadat L."/>
        </authorList>
    </citation>
    <scope>PROTEIN SEQUENCE OF 56-84 AND 200-209</scope>
    <scope>IDENTIFICATION BY MASS SPECTROMETRY</scope>
    <source>
        <strain>Sprague-Dawley</strain>
        <tissue>Spinal cord</tissue>
    </source>
</reference>
<feature type="chain" id="PRO_0000140530" description="Delta-aminolevulinic acid dehydratase">
    <location>
        <begin position="1"/>
        <end position="330"/>
    </location>
</feature>
<feature type="active site" description="Schiff-base intermediate with substrate" evidence="2">
    <location>
        <position position="199"/>
    </location>
</feature>
<feature type="active site" description="Schiff-base intermediate with substrate" evidence="2">
    <location>
        <position position="252"/>
    </location>
</feature>
<feature type="binding site" evidence="2">
    <location>
        <position position="122"/>
    </location>
    <ligand>
        <name>Zn(2+)</name>
        <dbReference type="ChEBI" id="CHEBI:29105"/>
        <label>1</label>
        <note>catalytic</note>
    </ligand>
</feature>
<feature type="binding site" evidence="2">
    <location>
        <position position="124"/>
    </location>
    <ligand>
        <name>Zn(2+)</name>
        <dbReference type="ChEBI" id="CHEBI:29105"/>
        <label>1</label>
        <note>catalytic</note>
    </ligand>
</feature>
<feature type="binding site" evidence="2">
    <location>
        <position position="131"/>
    </location>
    <ligand>
        <name>Zn(2+)</name>
        <dbReference type="ChEBI" id="CHEBI:29105"/>
        <label>2</label>
    </ligand>
</feature>
<feature type="binding site" evidence="2">
    <location>
        <position position="132"/>
    </location>
    <ligand>
        <name>Zn(2+)</name>
        <dbReference type="ChEBI" id="CHEBI:29105"/>
        <label>1</label>
        <note>catalytic</note>
    </ligand>
</feature>
<feature type="binding site" evidence="2">
    <location>
        <position position="209"/>
    </location>
    <ligand>
        <name>5-aminolevulinate</name>
        <dbReference type="ChEBI" id="CHEBI:356416"/>
        <label>1</label>
    </ligand>
</feature>
<feature type="binding site" evidence="2">
    <location>
        <position position="221"/>
    </location>
    <ligand>
        <name>5-aminolevulinate</name>
        <dbReference type="ChEBI" id="CHEBI:356416"/>
        <label>1</label>
    </ligand>
</feature>
<feature type="binding site" evidence="2">
    <location>
        <position position="223"/>
    </location>
    <ligand>
        <name>Zn(2+)</name>
        <dbReference type="ChEBI" id="CHEBI:29105"/>
        <label>2</label>
    </ligand>
</feature>
<feature type="binding site" evidence="2">
    <location>
        <position position="279"/>
    </location>
    <ligand>
        <name>5-aminolevulinate</name>
        <dbReference type="ChEBI" id="CHEBI:356416"/>
        <label>2</label>
    </ligand>
</feature>
<feature type="binding site" evidence="2">
    <location>
        <position position="318"/>
    </location>
    <ligand>
        <name>5-aminolevulinate</name>
        <dbReference type="ChEBI" id="CHEBI:356416"/>
        <label>2</label>
    </ligand>
</feature>
<feature type="modified residue" description="N6-succinyllysine" evidence="1">
    <location>
        <position position="199"/>
    </location>
</feature>
<feature type="modified residue" description="Phosphoserine" evidence="1">
    <location>
        <position position="215"/>
    </location>
</feature>
<feature type="modified residue" description="N6-succinyllysine" evidence="1">
    <location>
        <position position="252"/>
    </location>
</feature>
<comment type="function">
    <text evidence="2">Catalyzes an early step in the biosynthesis of tetrapyrroles. Binds two molecules of 5-aminolevulinate per subunit, each at a distinct site, and catalyzes their condensation to form porphobilinogen.</text>
</comment>
<comment type="catalytic activity">
    <reaction evidence="2">
        <text>2 5-aminolevulinate = porphobilinogen + 2 H2O + H(+)</text>
        <dbReference type="Rhea" id="RHEA:24064"/>
        <dbReference type="ChEBI" id="CHEBI:15377"/>
        <dbReference type="ChEBI" id="CHEBI:15378"/>
        <dbReference type="ChEBI" id="CHEBI:58126"/>
        <dbReference type="ChEBI" id="CHEBI:356416"/>
        <dbReference type="EC" id="4.2.1.24"/>
    </reaction>
</comment>
<comment type="cofactor">
    <cofactor evidence="2">
        <name>Zn(2+)</name>
        <dbReference type="ChEBI" id="CHEBI:29105"/>
    </cofactor>
    <text evidence="2">Binds 8 zinc ions per octamer. Requires four zinc ions per octamer for full catalytic activity. Can bind up to 2 zinc ions per subunit.</text>
</comment>
<comment type="activity regulation">
    <text evidence="2">Can alternate between a fully active homooctamer and a low-activity homohexamer. A bound magnesium ion may promote the assembly of the fully active homooctamer. The magnesium-binding site is absent in the low-activity homohexamer. Inhibited by compounds that favor the hexameric state. Inhibited by divalent lead ions. The lead ions partially displace the zinc cofactor.</text>
</comment>
<comment type="pathway">
    <text evidence="2">Porphyrin-containing compound metabolism; protoporphyrin-IX biosynthesis; coproporphyrinogen-III from 5-aminolevulinate: step 1/4.</text>
</comment>
<comment type="subunit">
    <text evidence="2">Homooctamer; active form. Homohexamer; low activity form.</text>
</comment>
<comment type="subcellular location">
    <subcellularLocation>
        <location evidence="1">Cytoplasm</location>
        <location evidence="1">Cytosol</location>
    </subcellularLocation>
</comment>
<comment type="similarity">
    <text evidence="3">Belongs to the ALAD family.</text>
</comment>
<sequence length="330" mass="36032">MHHQSVLHSGYFHPLLRAWQTTPSTVSATNLIYPIFVTDVPDDVQPIASLPGVARYGVNQLEEMLRPLVEAGLRCVLIFGVPSRVPKDEQGSAADSEDSPTIEAVRLLRKTFPTLLVACDVCLCPYTSHGHCGLLSENGAFLAEESRQRLAEVALAYAKAGCQVVAPSDMMDGRVEAIKAALLKHGLGNRVSVMSYSAKFASCFYGPFRDAAQSSPAFGDRRCYQLPPGARGLALRAVARDIQEGADILMVKPGLPYLDMVQEVKDKHPELPLAVYQVSGEFAMLWHGAKAGAFDLRTAVLESMTAFRRAGADIIITYFAPQLLKWLKEE</sequence>
<gene>
    <name type="primary">Alad</name>
</gene>
<keyword id="KW-0021">Allosteric enzyme</keyword>
<keyword id="KW-0963">Cytoplasm</keyword>
<keyword id="KW-0903">Direct protein sequencing</keyword>
<keyword id="KW-0350">Heme biosynthesis</keyword>
<keyword id="KW-0456">Lyase</keyword>
<keyword id="KW-0479">Metal-binding</keyword>
<keyword id="KW-0597">Phosphoprotein</keyword>
<keyword id="KW-0627">Porphyrin biosynthesis</keyword>
<keyword id="KW-1185">Reference proteome</keyword>
<keyword id="KW-0862">Zinc</keyword>
<dbReference type="EC" id="4.2.1.24"/>
<dbReference type="EMBL" id="X04959">
    <property type="protein sequence ID" value="CAA28621.1"/>
    <property type="molecule type" value="mRNA"/>
</dbReference>
<dbReference type="EMBL" id="BC061806">
    <property type="protein sequence ID" value="AAH61806.1"/>
    <property type="molecule type" value="mRNA"/>
</dbReference>
<dbReference type="PIR" id="A24724">
    <property type="entry name" value="A24724"/>
</dbReference>
<dbReference type="RefSeq" id="NP_001416253.1">
    <property type="nucleotide sequence ID" value="NM_001429324.1"/>
</dbReference>
<dbReference type="RefSeq" id="NP_037031.1">
    <property type="nucleotide sequence ID" value="NM_012899.3"/>
</dbReference>
<dbReference type="RefSeq" id="XP_006238296.1">
    <property type="nucleotide sequence ID" value="XM_006238234.3"/>
</dbReference>
<dbReference type="RefSeq" id="XP_006238297.1">
    <property type="nucleotide sequence ID" value="XM_006238235.3"/>
</dbReference>
<dbReference type="SMR" id="P06214"/>
<dbReference type="BioGRID" id="247413">
    <property type="interactions" value="1"/>
</dbReference>
<dbReference type="FunCoup" id="P06214">
    <property type="interactions" value="1828"/>
</dbReference>
<dbReference type="STRING" id="10116.ENSRNOP00000020625"/>
<dbReference type="iPTMnet" id="P06214"/>
<dbReference type="PhosphoSitePlus" id="P06214"/>
<dbReference type="jPOST" id="P06214"/>
<dbReference type="PaxDb" id="10116-ENSRNOP00000020625"/>
<dbReference type="Ensembl" id="ENSRNOT00000020625.7">
    <property type="protein sequence ID" value="ENSRNOP00000020625.2"/>
    <property type="gene ID" value="ENSRNOG00000015206.7"/>
</dbReference>
<dbReference type="GeneID" id="25374"/>
<dbReference type="KEGG" id="rno:25374"/>
<dbReference type="UCSC" id="RGD:2083">
    <property type="organism name" value="rat"/>
</dbReference>
<dbReference type="AGR" id="RGD:2083"/>
<dbReference type="CTD" id="210"/>
<dbReference type="RGD" id="2083">
    <property type="gene designation" value="Alad"/>
</dbReference>
<dbReference type="eggNOG" id="KOG2794">
    <property type="taxonomic scope" value="Eukaryota"/>
</dbReference>
<dbReference type="GeneTree" id="ENSGT00390000006998"/>
<dbReference type="HOGENOM" id="CLU_035731_0_1_1"/>
<dbReference type="InParanoid" id="P06214"/>
<dbReference type="OMA" id="YQMDYAN"/>
<dbReference type="OrthoDB" id="1530at2759"/>
<dbReference type="PhylomeDB" id="P06214"/>
<dbReference type="TreeFam" id="TF300665"/>
<dbReference type="Reactome" id="R-RNO-189451">
    <property type="pathway name" value="Heme biosynthesis"/>
</dbReference>
<dbReference type="Reactome" id="R-RNO-6798695">
    <property type="pathway name" value="Neutrophil degranulation"/>
</dbReference>
<dbReference type="UniPathway" id="UPA00251">
    <property type="reaction ID" value="UER00318"/>
</dbReference>
<dbReference type="PRO" id="PR:P06214"/>
<dbReference type="Proteomes" id="UP000002494">
    <property type="component" value="Chromosome 5"/>
</dbReference>
<dbReference type="Bgee" id="ENSRNOG00000015206">
    <property type="expression patterns" value="Expressed in liver and 19 other cell types or tissues"/>
</dbReference>
<dbReference type="ExpressionAtlas" id="P06214">
    <property type="expression patterns" value="baseline and differential"/>
</dbReference>
<dbReference type="GO" id="GO:0005829">
    <property type="term" value="C:cytosol"/>
    <property type="evidence" value="ECO:0000266"/>
    <property type="project" value="RGD"/>
</dbReference>
<dbReference type="GO" id="GO:0005615">
    <property type="term" value="C:extracellular space"/>
    <property type="evidence" value="ECO:0000314"/>
    <property type="project" value="RGD"/>
</dbReference>
<dbReference type="GO" id="GO:0042802">
    <property type="term" value="F:identical protein binding"/>
    <property type="evidence" value="ECO:0000266"/>
    <property type="project" value="RGD"/>
</dbReference>
<dbReference type="GO" id="GO:0004655">
    <property type="term" value="F:porphobilinogen synthase activity"/>
    <property type="evidence" value="ECO:0000314"/>
    <property type="project" value="RGD"/>
</dbReference>
<dbReference type="GO" id="GO:1904854">
    <property type="term" value="F:proteasome core complex binding"/>
    <property type="evidence" value="ECO:0000314"/>
    <property type="project" value="RGD"/>
</dbReference>
<dbReference type="GO" id="GO:0008270">
    <property type="term" value="F:zinc ion binding"/>
    <property type="evidence" value="ECO:0000250"/>
    <property type="project" value="UniProtKB"/>
</dbReference>
<dbReference type="GO" id="GO:0071353">
    <property type="term" value="P:cellular response to interleukin-4"/>
    <property type="evidence" value="ECO:0000266"/>
    <property type="project" value="RGD"/>
</dbReference>
<dbReference type="GO" id="GO:0071284">
    <property type="term" value="P:cellular response to lead ion"/>
    <property type="evidence" value="ECO:0000270"/>
    <property type="project" value="RGD"/>
</dbReference>
<dbReference type="GO" id="GO:0006784">
    <property type="term" value="P:heme A biosynthetic process"/>
    <property type="evidence" value="ECO:0000266"/>
    <property type="project" value="RGD"/>
</dbReference>
<dbReference type="GO" id="GO:0006785">
    <property type="term" value="P:heme B biosynthetic process"/>
    <property type="evidence" value="ECO:0000266"/>
    <property type="project" value="RGD"/>
</dbReference>
<dbReference type="GO" id="GO:0006783">
    <property type="term" value="P:heme biosynthetic process"/>
    <property type="evidence" value="ECO:0000314"/>
    <property type="project" value="RGD"/>
</dbReference>
<dbReference type="GO" id="GO:0048034">
    <property type="term" value="P:heme O biosynthetic process"/>
    <property type="evidence" value="ECO:0000266"/>
    <property type="project" value="RGD"/>
</dbReference>
<dbReference type="GO" id="GO:1901799">
    <property type="term" value="P:negative regulation of proteasomal protein catabolic process"/>
    <property type="evidence" value="ECO:0000266"/>
    <property type="project" value="RGD"/>
</dbReference>
<dbReference type="GO" id="GO:0051260">
    <property type="term" value="P:protein homooligomerization"/>
    <property type="evidence" value="ECO:0000266"/>
    <property type="project" value="RGD"/>
</dbReference>
<dbReference type="GO" id="GO:0006782">
    <property type="term" value="P:protoporphyrinogen IX biosynthetic process"/>
    <property type="evidence" value="ECO:0007669"/>
    <property type="project" value="UniProtKB-UniPathway"/>
</dbReference>
<dbReference type="GO" id="GO:0014823">
    <property type="term" value="P:response to activity"/>
    <property type="evidence" value="ECO:0000270"/>
    <property type="project" value="RGD"/>
</dbReference>
<dbReference type="GO" id="GO:0010044">
    <property type="term" value="P:response to aluminum ion"/>
    <property type="evidence" value="ECO:0000270"/>
    <property type="project" value="RGD"/>
</dbReference>
<dbReference type="GO" id="GO:0043200">
    <property type="term" value="P:response to amino acid"/>
    <property type="evidence" value="ECO:0000270"/>
    <property type="project" value="RGD"/>
</dbReference>
<dbReference type="GO" id="GO:0046685">
    <property type="term" value="P:response to arsenic-containing substance"/>
    <property type="evidence" value="ECO:0000314"/>
    <property type="project" value="RGD"/>
</dbReference>
<dbReference type="GO" id="GO:0046686">
    <property type="term" value="P:response to cadmium ion"/>
    <property type="evidence" value="ECO:0000314"/>
    <property type="project" value="RGD"/>
</dbReference>
<dbReference type="GO" id="GO:0032025">
    <property type="term" value="P:response to cobalt ion"/>
    <property type="evidence" value="ECO:0000270"/>
    <property type="project" value="RGD"/>
</dbReference>
<dbReference type="GO" id="GO:0045471">
    <property type="term" value="P:response to ethanol"/>
    <property type="evidence" value="ECO:0000314"/>
    <property type="project" value="RGD"/>
</dbReference>
<dbReference type="GO" id="GO:0070542">
    <property type="term" value="P:response to fatty acid"/>
    <property type="evidence" value="ECO:0000270"/>
    <property type="project" value="RGD"/>
</dbReference>
<dbReference type="GO" id="GO:0051384">
    <property type="term" value="P:response to glucocorticoid"/>
    <property type="evidence" value="ECO:0000270"/>
    <property type="project" value="RGD"/>
</dbReference>
<dbReference type="GO" id="GO:0009635">
    <property type="term" value="P:response to herbicide"/>
    <property type="evidence" value="ECO:0000270"/>
    <property type="project" value="RGD"/>
</dbReference>
<dbReference type="GO" id="GO:0009725">
    <property type="term" value="P:response to hormone"/>
    <property type="evidence" value="ECO:0000270"/>
    <property type="project" value="RGD"/>
</dbReference>
<dbReference type="GO" id="GO:0001666">
    <property type="term" value="P:response to hypoxia"/>
    <property type="evidence" value="ECO:0000270"/>
    <property type="project" value="RGD"/>
</dbReference>
<dbReference type="GO" id="GO:0010212">
    <property type="term" value="P:response to ionizing radiation"/>
    <property type="evidence" value="ECO:0000270"/>
    <property type="project" value="RGD"/>
</dbReference>
<dbReference type="GO" id="GO:0010039">
    <property type="term" value="P:response to iron ion"/>
    <property type="evidence" value="ECO:0000270"/>
    <property type="project" value="RGD"/>
</dbReference>
<dbReference type="GO" id="GO:0010288">
    <property type="term" value="P:response to lead ion"/>
    <property type="evidence" value="ECO:0000270"/>
    <property type="project" value="RGD"/>
</dbReference>
<dbReference type="GO" id="GO:0032496">
    <property type="term" value="P:response to lipopolysaccharide"/>
    <property type="evidence" value="ECO:0000270"/>
    <property type="project" value="RGD"/>
</dbReference>
<dbReference type="GO" id="GO:0046689">
    <property type="term" value="P:response to mercury ion"/>
    <property type="evidence" value="ECO:0000270"/>
    <property type="project" value="RGD"/>
</dbReference>
<dbReference type="GO" id="GO:0010038">
    <property type="term" value="P:response to metal ion"/>
    <property type="evidence" value="ECO:0000314"/>
    <property type="project" value="RGD"/>
</dbReference>
<dbReference type="GO" id="GO:0051597">
    <property type="term" value="P:response to methylmercury"/>
    <property type="evidence" value="ECO:0000270"/>
    <property type="project" value="RGD"/>
</dbReference>
<dbReference type="GO" id="GO:0007584">
    <property type="term" value="P:response to nutrient"/>
    <property type="evidence" value="ECO:0000314"/>
    <property type="project" value="RGD"/>
</dbReference>
<dbReference type="GO" id="GO:0031667">
    <property type="term" value="P:response to nutrient levels"/>
    <property type="evidence" value="ECO:0000270"/>
    <property type="project" value="RGD"/>
</dbReference>
<dbReference type="GO" id="GO:0006979">
    <property type="term" value="P:response to oxidative stress"/>
    <property type="evidence" value="ECO:0000270"/>
    <property type="project" value="RGD"/>
</dbReference>
<dbReference type="GO" id="GO:0070541">
    <property type="term" value="P:response to platinum ion"/>
    <property type="evidence" value="ECO:0000270"/>
    <property type="project" value="RGD"/>
</dbReference>
<dbReference type="GO" id="GO:0010269">
    <property type="term" value="P:response to selenium ion"/>
    <property type="evidence" value="ECO:0000270"/>
    <property type="project" value="RGD"/>
</dbReference>
<dbReference type="GO" id="GO:0009636">
    <property type="term" value="P:response to toxic substance"/>
    <property type="evidence" value="ECO:0000270"/>
    <property type="project" value="RGD"/>
</dbReference>
<dbReference type="GO" id="GO:0033273">
    <property type="term" value="P:response to vitamin"/>
    <property type="evidence" value="ECO:0000270"/>
    <property type="project" value="RGD"/>
</dbReference>
<dbReference type="GO" id="GO:0010266">
    <property type="term" value="P:response to vitamin B1"/>
    <property type="evidence" value="ECO:0000270"/>
    <property type="project" value="RGD"/>
</dbReference>
<dbReference type="GO" id="GO:0033197">
    <property type="term" value="P:response to vitamin E"/>
    <property type="evidence" value="ECO:0000270"/>
    <property type="project" value="RGD"/>
</dbReference>
<dbReference type="GO" id="GO:0009410">
    <property type="term" value="P:response to xenobiotic stimulus"/>
    <property type="evidence" value="ECO:0000314"/>
    <property type="project" value="RGD"/>
</dbReference>
<dbReference type="GO" id="GO:0010043">
    <property type="term" value="P:response to zinc ion"/>
    <property type="evidence" value="ECO:0000314"/>
    <property type="project" value="RGD"/>
</dbReference>
<dbReference type="CDD" id="cd04824">
    <property type="entry name" value="eu_ALAD_PBGS_cysteine_rich"/>
    <property type="match status" value="1"/>
</dbReference>
<dbReference type="FunFam" id="3.20.20.70:FF:000048">
    <property type="entry name" value="Delta-aminolevulinic acid dehydratase"/>
    <property type="match status" value="1"/>
</dbReference>
<dbReference type="Gene3D" id="3.20.20.70">
    <property type="entry name" value="Aldolase class I"/>
    <property type="match status" value="1"/>
</dbReference>
<dbReference type="InterPro" id="IPR001731">
    <property type="entry name" value="ALAD"/>
</dbReference>
<dbReference type="InterPro" id="IPR030656">
    <property type="entry name" value="ALAD_AS"/>
</dbReference>
<dbReference type="InterPro" id="IPR013785">
    <property type="entry name" value="Aldolase_TIM"/>
</dbReference>
<dbReference type="NCBIfam" id="NF006762">
    <property type="entry name" value="PRK09283.1"/>
    <property type="match status" value="1"/>
</dbReference>
<dbReference type="PANTHER" id="PTHR11458">
    <property type="entry name" value="DELTA-AMINOLEVULINIC ACID DEHYDRATASE"/>
    <property type="match status" value="1"/>
</dbReference>
<dbReference type="PANTHER" id="PTHR11458:SF0">
    <property type="entry name" value="DELTA-AMINOLEVULINIC ACID DEHYDRATASE"/>
    <property type="match status" value="1"/>
</dbReference>
<dbReference type="Pfam" id="PF00490">
    <property type="entry name" value="ALAD"/>
    <property type="match status" value="1"/>
</dbReference>
<dbReference type="PIRSF" id="PIRSF001415">
    <property type="entry name" value="Porphbilin_synth"/>
    <property type="match status" value="1"/>
</dbReference>
<dbReference type="PRINTS" id="PR00144">
    <property type="entry name" value="DALDHYDRTASE"/>
</dbReference>
<dbReference type="SMART" id="SM01004">
    <property type="entry name" value="ALAD"/>
    <property type="match status" value="1"/>
</dbReference>
<dbReference type="SUPFAM" id="SSF51569">
    <property type="entry name" value="Aldolase"/>
    <property type="match status" value="1"/>
</dbReference>
<dbReference type="PROSITE" id="PS00169">
    <property type="entry name" value="D_ALA_DEHYDRATASE"/>
    <property type="match status" value="1"/>
</dbReference>
<accession>P06214</accession>
<evidence type="ECO:0000250" key="1">
    <source>
        <dbReference type="UniProtKB" id="P10518"/>
    </source>
</evidence>
<evidence type="ECO:0000250" key="2">
    <source>
        <dbReference type="UniProtKB" id="P13716"/>
    </source>
</evidence>
<evidence type="ECO:0000305" key="3"/>
<protein>
    <recommendedName>
        <fullName>Delta-aminolevulinic acid dehydratase</fullName>
        <shortName>ALADH</shortName>
        <ecNumber>4.2.1.24</ecNumber>
    </recommendedName>
    <alternativeName>
        <fullName>Porphobilinogen synthase</fullName>
    </alternativeName>
</protein>